<name>P0_TYYVF</name>
<proteinExistence type="evidence at protein level"/>
<organism>
    <name type="scientific">Turnip yellows virus (isolate FL-1)</name>
    <name type="common">TuYV</name>
    <name type="synonym">BWYV-FL1</name>
    <dbReference type="NCBI Taxonomy" id="12043"/>
    <lineage>
        <taxon>Viruses</taxon>
        <taxon>Riboviria</taxon>
        <taxon>Orthornavirae</taxon>
        <taxon>Pisuviricota</taxon>
        <taxon>Pisoniviricetes</taxon>
        <taxon>Sobelivirales</taxon>
        <taxon>Solemoviridae</taxon>
        <taxon>Polerovirus</taxon>
        <taxon>Beet western yellows virus</taxon>
    </lineage>
</organism>
<feature type="chain" id="PRO_0000222392" description="Suppressor of silencing P0">
    <location>
        <begin position="1"/>
        <end position="249"/>
    </location>
</feature>
<feature type="domain" description="F-box-like">
    <location>
        <begin position="63"/>
        <end position="67"/>
    </location>
</feature>
<evidence type="ECO:0000269" key="1">
    <source>
    </source>
</evidence>
<evidence type="ECO:0000269" key="2">
    <source>
    </source>
</evidence>
<evidence type="ECO:0000305" key="3"/>
<evidence type="ECO:0000305" key="4">
    <source>
    </source>
</evidence>
<keyword id="KW-0945">Host-virus interaction</keyword>
<keyword id="KW-1090">Inhibition of host innate immune response by virus</keyword>
<keyword id="KW-1185">Reference proteome</keyword>
<keyword id="KW-0941">Suppressor of RNA silencing</keyword>
<keyword id="KW-0899">Viral immunoevasion</keyword>
<accession>P09504</accession>
<reference key="1">
    <citation type="journal article" date="1988" name="Nucleic Acids Res.">
        <title>Nucleotide sequence of beet western yellows virus RNA.</title>
        <authorList>
            <person name="Veidt I."/>
            <person name="Lot H."/>
            <person name="Leiser M."/>
            <person name="Scheidecker D."/>
            <person name="Guilley H."/>
            <person name="Richards K.E."/>
            <person name="Jonard G."/>
        </authorList>
    </citation>
    <scope>NUCLEOTIDE SEQUENCE [GENOMIC RNA]</scope>
</reference>
<reference key="2">
    <citation type="journal article" date="2002" name="J. Virol.">
        <title>P0 of beet Western yellows virus is a suppressor of posttranscriptional gene silencing.</title>
        <authorList>
            <person name="Pfeffer S."/>
            <person name="Dunoyer P."/>
            <person name="Heim F."/>
            <person name="Richards K.E."/>
            <person name="Jonard G."/>
            <person name="Ziegler-Graff V."/>
        </authorList>
    </citation>
    <scope>RETRACTED PAPER</scope>
</reference>
<reference key="3">
    <citation type="journal article" date="2017" name="J. Virol.">
        <authorList>
            <person name="Pfeffer S."/>
            <person name="Dunoyer P."/>
            <person name="Heim F."/>
            <person name="Richards K.E."/>
            <person name="Jonard G."/>
            <person name="Ziegler-Graff V."/>
        </authorList>
    </citation>
    <scope>RETRACTION NOTICE OF PUBMED:12050394</scope>
</reference>
<reference key="4">
    <citation type="journal article" date="2006" name="Proc. Natl. Acad. Sci. U.S.A.">
        <title>F-box-like domain in the polerovirus protein P0 is required for silencing suppressor function.</title>
        <authorList>
            <person name="Pazhouhandeh M."/>
            <person name="Dieterle M."/>
            <person name="Marrocco K."/>
            <person name="Lechner E."/>
            <person name="Berry B."/>
            <person name="Brault V."/>
            <person name="Hemmer O."/>
            <person name="Kretsch T."/>
            <person name="Richards K.E."/>
            <person name="Genschik P."/>
            <person name="Ziegler-Graff V."/>
        </authorList>
    </citation>
    <scope>FUNCTION</scope>
    <scope>INTERACTION WITH ARABIDOPSIS THALIANA ASK1 AND ASK2</scope>
    <scope>IDENTIFICATION IN A SCF P0 COMPLEX</scope>
</reference>
<reference key="5">
    <citation type="journal article" date="2007" name="Curr. Biol.">
        <title>The Polerovirus silencing suppressor P0 targets ARGONAUTE proteins for degradation.</title>
        <authorList>
            <person name="Baumberger N."/>
            <person name="Tsai C.-H."/>
            <person name="Lie M."/>
            <person name="Havecker E."/>
            <person name="Baulcombe D.C."/>
        </authorList>
    </citation>
    <scope>FUNCTION</scope>
    <scope>INTERACTION WITH ARABIDOPSIS THALIANA AGO1</scope>
</reference>
<gene>
    <name type="ORF">ORF0</name>
</gene>
<comment type="function">
    <text evidence="1 2">Suppressor of RNA-mediated gene silencing, also known as post-transcriptional gene silencing (PTGS), a mechanism of plant viral defense that limits the accumulation of viral RNAs. The P0 protein suppresses local PTGS using its F-box-like domain to mediate destabilization and degradation of the AGO1 protein.</text>
</comment>
<comment type="subunit">
    <text evidence="1 2">Interacts (via F-box-like domain) with host AGO1; this interaction targets AGO1 for degradation, and thereby suppresses the silencing function of the latter. Interacts (via F-box-like domain) with host ASK1 and ASK2 (SKP proteins); these interactions are essential for viral pathogenicity. Part of a SCF P0 complex composed of P0 and the host proteins SKP and CUL1.</text>
</comment>
<comment type="similarity">
    <text evidence="3">Belongs to the polerovirus P0 protein family.</text>
</comment>
<comment type="caution">
    <text evidence="4">The publication has been retracted because some figures presented signs of inappropriate manipulation.</text>
</comment>
<dbReference type="EMBL" id="X13063">
    <property type="protein sequence ID" value="CAA31462.1"/>
    <property type="molecule type" value="Genomic_RNA"/>
</dbReference>
<dbReference type="PIR" id="S01938">
    <property type="entry name" value="S01938"/>
</dbReference>
<dbReference type="RefSeq" id="NP_620484.1">
    <property type="nucleotide sequence ID" value="NC_003743.1"/>
</dbReference>
<dbReference type="KEGG" id="vg:940485"/>
<dbReference type="Proteomes" id="UP000007545">
    <property type="component" value="Segment"/>
</dbReference>
<dbReference type="GO" id="GO:0052170">
    <property type="term" value="P:symbiont-mediated suppression of host innate immune response"/>
    <property type="evidence" value="ECO:0007669"/>
    <property type="project" value="UniProtKB-KW"/>
</dbReference>
<dbReference type="GO" id="GO:0016032">
    <property type="term" value="P:viral process"/>
    <property type="evidence" value="ECO:0007669"/>
    <property type="project" value="InterPro"/>
</dbReference>
<dbReference type="InterPro" id="IPR006755">
    <property type="entry name" value="Virus_P0"/>
</dbReference>
<dbReference type="Pfam" id="PF04662">
    <property type="entry name" value="Luteo_PO"/>
    <property type="match status" value="1"/>
</dbReference>
<protein>
    <recommendedName>
        <fullName>Suppressor of silencing P0</fullName>
    </recommendedName>
    <alternativeName>
        <fullName>29 kDa protein</fullName>
    </alternativeName>
    <alternativeName>
        <fullName>Protein ORF0</fullName>
    </alternativeName>
</protein>
<sequence length="249" mass="29077">MQFLAHDNFHTLQVKKVRFLHPQQEVFLLAGLLLNIKQFVRAIKERNNVFKIDVFLRSLLYQLPFHLGSCFHDAPRELIPATEPELCAWFSLQTGYAPASTSGRVNLHVPGTKTSRRRIIQRSFASDFSEKLKRFPECLFVSLELFQRLLSTWTKDVERRIFFSCREIPLGSDTLMELANLGEFLRVMVVGEQFHNSRLLSRLAVHCYKIYGEDGFISFWRIANLDHFDCFLTPEEILFSSSVYTEMFV</sequence>
<organismHost>
    <name type="scientific">Beta vulgaris</name>
    <name type="common">Sugar beet</name>
    <dbReference type="NCBI Taxonomy" id="161934"/>
</organismHost>
<organismHost>
    <name type="scientific">Brassica napus subsp. rapifera</name>
    <dbReference type="NCBI Taxonomy" id="3709"/>
</organismHost>
<organismHost>
    <name type="scientific">Brassica napus var. napus</name>
    <dbReference type="NCBI Taxonomy" id="138011"/>
</organismHost>
<organismHost>
    <name type="scientific">Brassica nigra</name>
    <name type="common">Black mustard</name>
    <name type="synonym">Sinapis nigra</name>
    <dbReference type="NCBI Taxonomy" id="3710"/>
</organismHost>
<organismHost>
    <name type="scientific">Brassica oleracea var. botrytis</name>
    <name type="common">Cauliflower</name>
    <dbReference type="NCBI Taxonomy" id="3715"/>
</organismHost>
<organismHost>
    <name type="scientific">Brassica oleracea var. capitata</name>
    <name type="common">Cabbage</name>
    <dbReference type="NCBI Taxonomy" id="3716"/>
</organismHost>
<organismHost>
    <name type="scientific">Brassica rapa subsp. rapa</name>
    <name type="common">Turnip</name>
    <dbReference type="NCBI Taxonomy" id="51350"/>
</organismHost>
<organismHost>
    <name type="scientific">Capsicum annuum</name>
    <name type="common">Capsicum pepper</name>
    <dbReference type="NCBI Taxonomy" id="4072"/>
</organismHost>
<organismHost>
    <name type="scientific">Cicer arietinum</name>
    <name type="common">Chickpea</name>
    <name type="synonym">Garbanzo</name>
    <dbReference type="NCBI Taxonomy" id="3827"/>
</organismHost>
<organismHost>
    <name type="scientific">Citrullus lanatus</name>
    <name type="common">Watermelon</name>
    <name type="synonym">Citrullus vulgaris</name>
    <dbReference type="NCBI Taxonomy" id="3654"/>
</organismHost>
<organismHost>
    <name type="scientific">Crambe hispanica subsp. abyssinica</name>
    <name type="common">Abyssinian kale</name>
    <name type="synonym">Crambe abyssinica</name>
    <dbReference type="NCBI Taxonomy" id="3721"/>
</organismHost>
<organismHost>
    <name type="scientific">Cucumis sativus</name>
    <name type="common">Cucumber</name>
    <dbReference type="NCBI Taxonomy" id="3659"/>
</organismHost>
<organismHost>
    <name type="scientific">Cucurbita pepo</name>
    <name type="common">Vegetable marrow</name>
    <name type="synonym">Summer squash</name>
    <dbReference type="NCBI Taxonomy" id="3663"/>
</organismHost>
<organismHost>
    <name type="scientific">Glycine max</name>
    <name type="common">Soybean</name>
    <name type="synonym">Glycine hispida</name>
    <dbReference type="NCBI Taxonomy" id="3847"/>
</organismHost>
<organismHost>
    <name type="scientific">Helianthus annuus</name>
    <name type="common">Common sunflower</name>
    <dbReference type="NCBI Taxonomy" id="4232"/>
</organismHost>
<organismHost>
    <name type="scientific">Lactuca sativa</name>
    <name type="common">Garden lettuce</name>
    <dbReference type="NCBI Taxonomy" id="4236"/>
</organismHost>
<organismHost>
    <name type="scientific">Phlox drummondii</name>
    <name type="common">Annual phlox</name>
    <dbReference type="NCBI Taxonomy" id="103529"/>
</organismHost>
<organismHost>
    <name type="scientific">Pisum sativum</name>
    <name type="common">Garden pea</name>
    <name type="synonym">Lathyrus oleraceus</name>
    <dbReference type="NCBI Taxonomy" id="3888"/>
</organismHost>
<organismHost>
    <name type="scientific">Raphanus sativus</name>
    <name type="common">Radish</name>
    <name type="synonym">Raphanus raphanistrum var. sativus</name>
    <dbReference type="NCBI Taxonomy" id="3726"/>
</organismHost>
<organismHost>
    <name type="scientific">Solanum lycopersicum</name>
    <name type="common">Tomato</name>
    <name type="synonym">Lycopersicon esculentum</name>
    <dbReference type="NCBI Taxonomy" id="4081"/>
</organismHost>
<organismHost>
    <name type="scientific">Spinacia oleracea</name>
    <name type="common">Spinach</name>
    <dbReference type="NCBI Taxonomy" id="3562"/>
</organismHost>
<organismHost>
    <name type="scientific">Trifolium subterraneum</name>
    <name type="common">Subterranean clover</name>
    <dbReference type="NCBI Taxonomy" id="3900"/>
</organismHost>
<organismHost>
    <name type="scientific">Vicia faba</name>
    <name type="common">Broad bean</name>
    <name type="synonym">Faba vulgaris</name>
    <dbReference type="NCBI Taxonomy" id="3906"/>
</organismHost>